<accession>O48677</accession>
<accession>Q4PT24</accession>
<keyword id="KW-0106">Calcium</keyword>
<keyword id="KW-1015">Disulfide bond</keyword>
<keyword id="KW-0325">Glycoprotein</keyword>
<keyword id="KW-0349">Heme</keyword>
<keyword id="KW-0376">Hydrogen peroxide</keyword>
<keyword id="KW-0408">Iron</keyword>
<keyword id="KW-0479">Metal-binding</keyword>
<keyword id="KW-0560">Oxidoreductase</keyword>
<keyword id="KW-0575">Peroxidase</keyword>
<keyword id="KW-1185">Reference proteome</keyword>
<keyword id="KW-0964">Secreted</keyword>
<keyword id="KW-0732">Signal</keyword>
<name>PER6_ARATH</name>
<comment type="function">
    <text>Removal of H(2)O(2), oxidation of toxic reductants, biosynthesis and degradation of lignin, suberization, auxin catabolism, response to environmental stresses such as wounding, pathogen attack and oxidative stress. These functions might be dependent on each isozyme/isoform in each plant tissue.</text>
</comment>
<comment type="catalytic activity">
    <reaction>
        <text>2 a phenolic donor + H2O2 = 2 a phenolic radical donor + 2 H2O</text>
        <dbReference type="Rhea" id="RHEA:56136"/>
        <dbReference type="ChEBI" id="CHEBI:15377"/>
        <dbReference type="ChEBI" id="CHEBI:16240"/>
        <dbReference type="ChEBI" id="CHEBI:139520"/>
        <dbReference type="ChEBI" id="CHEBI:139521"/>
        <dbReference type="EC" id="1.11.1.7"/>
    </reaction>
</comment>
<comment type="cofactor">
    <cofactor evidence="2">
        <name>heme b</name>
        <dbReference type="ChEBI" id="CHEBI:60344"/>
    </cofactor>
    <text evidence="2">Binds 1 heme b (iron(II)-protoporphyrin IX) group per subunit.</text>
</comment>
<comment type="cofactor">
    <cofactor evidence="2">
        <name>Ca(2+)</name>
        <dbReference type="ChEBI" id="CHEBI:29108"/>
    </cofactor>
    <text evidence="2">Binds 2 calcium ions per subunit.</text>
</comment>
<comment type="subcellular location">
    <subcellularLocation>
        <location evidence="2">Secreted</location>
    </subcellularLocation>
</comment>
<comment type="miscellaneous">
    <text>There are 73 peroxidase genes in A.thaliana.</text>
</comment>
<comment type="similarity">
    <text evidence="2">Belongs to the peroxidase family. Classical plant (class III) peroxidase subfamily.</text>
</comment>
<feature type="signal peptide" evidence="1">
    <location>
        <begin position="1"/>
        <end position="20"/>
    </location>
</feature>
<feature type="chain" id="PRO_0000023672" description="Peroxidase 6">
    <location>
        <begin position="21"/>
        <end position="326"/>
    </location>
</feature>
<feature type="active site" description="Proton acceptor" evidence="2 3">
    <location>
        <position position="62"/>
    </location>
</feature>
<feature type="binding site" evidence="2">
    <location>
        <position position="63"/>
    </location>
    <ligand>
        <name>Ca(2+)</name>
        <dbReference type="ChEBI" id="CHEBI:29108"/>
        <label>1</label>
    </ligand>
</feature>
<feature type="binding site" evidence="2">
    <location>
        <position position="66"/>
    </location>
    <ligand>
        <name>Ca(2+)</name>
        <dbReference type="ChEBI" id="CHEBI:29108"/>
        <label>1</label>
    </ligand>
</feature>
<feature type="binding site" evidence="2">
    <location>
        <position position="68"/>
    </location>
    <ligand>
        <name>Ca(2+)</name>
        <dbReference type="ChEBI" id="CHEBI:29108"/>
        <label>1</label>
    </ligand>
</feature>
<feature type="binding site" evidence="2">
    <location>
        <position position="70"/>
    </location>
    <ligand>
        <name>Ca(2+)</name>
        <dbReference type="ChEBI" id="CHEBI:29108"/>
        <label>1</label>
    </ligand>
</feature>
<feature type="binding site" evidence="2">
    <location>
        <position position="72"/>
    </location>
    <ligand>
        <name>Ca(2+)</name>
        <dbReference type="ChEBI" id="CHEBI:29108"/>
        <label>1</label>
    </ligand>
</feature>
<feature type="binding site" description="axial binding residue" evidence="2">
    <location>
        <position position="190"/>
    </location>
    <ligand>
        <name>heme b</name>
        <dbReference type="ChEBI" id="CHEBI:60344"/>
    </ligand>
    <ligandPart>
        <name>Fe</name>
        <dbReference type="ChEBI" id="CHEBI:18248"/>
    </ligandPart>
</feature>
<feature type="binding site" evidence="2">
    <location>
        <position position="191"/>
    </location>
    <ligand>
        <name>Ca(2+)</name>
        <dbReference type="ChEBI" id="CHEBI:29108"/>
        <label>2</label>
    </ligand>
</feature>
<feature type="binding site" evidence="2">
    <location>
        <position position="242"/>
    </location>
    <ligand>
        <name>Ca(2+)</name>
        <dbReference type="ChEBI" id="CHEBI:29108"/>
        <label>2</label>
    </ligand>
</feature>
<feature type="binding site" evidence="2">
    <location>
        <position position="245"/>
    </location>
    <ligand>
        <name>Ca(2+)</name>
        <dbReference type="ChEBI" id="CHEBI:29108"/>
        <label>2</label>
    </ligand>
</feature>
<feature type="binding site" evidence="2">
    <location>
        <position position="250"/>
    </location>
    <ligand>
        <name>Ca(2+)</name>
        <dbReference type="ChEBI" id="CHEBI:29108"/>
        <label>2</label>
    </ligand>
</feature>
<feature type="site" description="Transition state stabilizer" evidence="2">
    <location>
        <position position="58"/>
    </location>
</feature>
<feature type="glycosylation site" description="N-linked (GlcNAc...) asparagine" evidence="1">
    <location>
        <position position="21"/>
    </location>
</feature>
<feature type="glycosylation site" description="N-linked (GlcNAc...) asparagine" evidence="1">
    <location>
        <position position="163"/>
    </location>
</feature>
<feature type="glycosylation site" description="N-linked (GlcNAc...) asparagine" evidence="1">
    <location>
        <position position="206"/>
    </location>
</feature>
<feature type="glycosylation site" description="N-linked (GlcNAc...) asparagine" evidence="1">
    <location>
        <position position="230"/>
    </location>
</feature>
<feature type="glycosylation site" description="N-linked (GlcNAc...) asparagine" evidence="1">
    <location>
        <position position="274"/>
    </location>
</feature>
<feature type="disulfide bond" evidence="2">
    <location>
        <begin position="31"/>
        <end position="112"/>
    </location>
</feature>
<feature type="disulfide bond" evidence="2">
    <location>
        <begin position="64"/>
        <end position="69"/>
    </location>
</feature>
<feature type="disulfide bond" evidence="2">
    <location>
        <begin position="118"/>
        <end position="318"/>
    </location>
</feature>
<feature type="disulfide bond" evidence="2">
    <location>
        <begin position="197"/>
        <end position="228"/>
    </location>
</feature>
<gene>
    <name type="primary">PER6</name>
    <name type="synonym">P6</name>
    <name type="ordered locus">At1g24110</name>
    <name type="ORF">F3I6.3</name>
</gene>
<evidence type="ECO:0000255" key="1"/>
<evidence type="ECO:0000255" key="2">
    <source>
        <dbReference type="PROSITE-ProRule" id="PRU00297"/>
    </source>
</evidence>
<evidence type="ECO:0000255" key="3">
    <source>
        <dbReference type="PROSITE-ProRule" id="PRU10012"/>
    </source>
</evidence>
<protein>
    <recommendedName>
        <fullName>Peroxidase 6</fullName>
        <shortName>Atperox P6</shortName>
        <ecNumber>1.11.1.7</ecNumber>
    </recommendedName>
</protein>
<proteinExistence type="evidence at transcript level"/>
<dbReference type="EC" id="1.11.1.7"/>
<dbReference type="EMBL" id="AC002396">
    <property type="protein sequence ID" value="AAC00571.1"/>
    <property type="molecule type" value="Genomic_DNA"/>
</dbReference>
<dbReference type="EMBL" id="CP002684">
    <property type="protein sequence ID" value="AEE30479.1"/>
    <property type="molecule type" value="Genomic_DNA"/>
</dbReference>
<dbReference type="EMBL" id="DQ056462">
    <property type="protein sequence ID" value="AAY78619.1"/>
    <property type="molecule type" value="mRNA"/>
</dbReference>
<dbReference type="PIR" id="T00640">
    <property type="entry name" value="T00640"/>
</dbReference>
<dbReference type="RefSeq" id="NP_173821.1">
    <property type="nucleotide sequence ID" value="NM_102257.2"/>
</dbReference>
<dbReference type="SMR" id="O48677"/>
<dbReference type="FunCoup" id="O48677">
    <property type="interactions" value="128"/>
</dbReference>
<dbReference type="STRING" id="3702.O48677"/>
<dbReference type="PeroxiBase" id="82">
    <property type="entry name" value="AtPrx06"/>
</dbReference>
<dbReference type="GlyCosmos" id="O48677">
    <property type="glycosylation" value="5 sites, No reported glycans"/>
</dbReference>
<dbReference type="GlyGen" id="O48677">
    <property type="glycosylation" value="5 sites"/>
</dbReference>
<dbReference type="PaxDb" id="3702-AT1G24110.1"/>
<dbReference type="ProteomicsDB" id="236771"/>
<dbReference type="EnsemblPlants" id="AT1G24110.1">
    <property type="protein sequence ID" value="AT1G24110.1"/>
    <property type="gene ID" value="AT1G24110"/>
</dbReference>
<dbReference type="GeneID" id="839023"/>
<dbReference type="Gramene" id="AT1G24110.1">
    <property type="protein sequence ID" value="AT1G24110.1"/>
    <property type="gene ID" value="AT1G24110"/>
</dbReference>
<dbReference type="KEGG" id="ath:AT1G24110"/>
<dbReference type="Araport" id="AT1G24110"/>
<dbReference type="TAIR" id="AT1G24110"/>
<dbReference type="eggNOG" id="ENOG502QR74">
    <property type="taxonomic scope" value="Eukaryota"/>
</dbReference>
<dbReference type="HOGENOM" id="CLU_010543_0_3_1"/>
<dbReference type="InParanoid" id="O48677"/>
<dbReference type="OMA" id="EEMSAFN"/>
<dbReference type="PhylomeDB" id="O48677"/>
<dbReference type="BioCyc" id="ARA:AT1G24110-MONOMER"/>
<dbReference type="PRO" id="PR:O48677"/>
<dbReference type="Proteomes" id="UP000006548">
    <property type="component" value="Chromosome 1"/>
</dbReference>
<dbReference type="ExpressionAtlas" id="O48677">
    <property type="expression patterns" value="baseline and differential"/>
</dbReference>
<dbReference type="GO" id="GO:0005576">
    <property type="term" value="C:extracellular region"/>
    <property type="evidence" value="ECO:0007669"/>
    <property type="project" value="UniProtKB-SubCell"/>
</dbReference>
<dbReference type="GO" id="GO:0020037">
    <property type="term" value="F:heme binding"/>
    <property type="evidence" value="ECO:0007669"/>
    <property type="project" value="InterPro"/>
</dbReference>
<dbReference type="GO" id="GO:0140825">
    <property type="term" value="F:lactoperoxidase activity"/>
    <property type="evidence" value="ECO:0007669"/>
    <property type="project" value="UniProtKB-EC"/>
</dbReference>
<dbReference type="GO" id="GO:0046872">
    <property type="term" value="F:metal ion binding"/>
    <property type="evidence" value="ECO:0007669"/>
    <property type="project" value="UniProtKB-KW"/>
</dbReference>
<dbReference type="GO" id="GO:0042744">
    <property type="term" value="P:hydrogen peroxide catabolic process"/>
    <property type="evidence" value="ECO:0007669"/>
    <property type="project" value="UniProtKB-KW"/>
</dbReference>
<dbReference type="GO" id="GO:0006979">
    <property type="term" value="P:response to oxidative stress"/>
    <property type="evidence" value="ECO:0007669"/>
    <property type="project" value="InterPro"/>
</dbReference>
<dbReference type="CDD" id="cd00693">
    <property type="entry name" value="secretory_peroxidase"/>
    <property type="match status" value="1"/>
</dbReference>
<dbReference type="FunFam" id="1.10.420.10:FF:000001">
    <property type="entry name" value="Peroxidase"/>
    <property type="match status" value="1"/>
</dbReference>
<dbReference type="Gene3D" id="1.10.520.10">
    <property type="match status" value="1"/>
</dbReference>
<dbReference type="Gene3D" id="1.10.420.10">
    <property type="entry name" value="Peroxidase, domain 2"/>
    <property type="match status" value="1"/>
</dbReference>
<dbReference type="InterPro" id="IPR002016">
    <property type="entry name" value="Haem_peroxidase"/>
</dbReference>
<dbReference type="InterPro" id="IPR010255">
    <property type="entry name" value="Haem_peroxidase_sf"/>
</dbReference>
<dbReference type="InterPro" id="IPR000823">
    <property type="entry name" value="Peroxidase_pln"/>
</dbReference>
<dbReference type="InterPro" id="IPR019794">
    <property type="entry name" value="Peroxidases_AS"/>
</dbReference>
<dbReference type="InterPro" id="IPR019793">
    <property type="entry name" value="Peroxidases_heam-ligand_BS"/>
</dbReference>
<dbReference type="InterPro" id="IPR033905">
    <property type="entry name" value="Secretory_peroxidase"/>
</dbReference>
<dbReference type="PANTHER" id="PTHR31517">
    <property type="match status" value="1"/>
</dbReference>
<dbReference type="PANTHER" id="PTHR31517:SF17">
    <property type="entry name" value="PEROXIDASE 6"/>
    <property type="match status" value="1"/>
</dbReference>
<dbReference type="Pfam" id="PF00141">
    <property type="entry name" value="peroxidase"/>
    <property type="match status" value="1"/>
</dbReference>
<dbReference type="PRINTS" id="PR00458">
    <property type="entry name" value="PEROXIDASE"/>
</dbReference>
<dbReference type="PRINTS" id="PR00461">
    <property type="entry name" value="PLPEROXIDASE"/>
</dbReference>
<dbReference type="SUPFAM" id="SSF48113">
    <property type="entry name" value="Heme-dependent peroxidases"/>
    <property type="match status" value="1"/>
</dbReference>
<dbReference type="PROSITE" id="PS00435">
    <property type="entry name" value="PEROXIDASE_1"/>
    <property type="match status" value="1"/>
</dbReference>
<dbReference type="PROSITE" id="PS00436">
    <property type="entry name" value="PEROXIDASE_2"/>
    <property type="match status" value="1"/>
</dbReference>
<dbReference type="PROSITE" id="PS50873">
    <property type="entry name" value="PEROXIDASE_4"/>
    <property type="match status" value="1"/>
</dbReference>
<reference key="1">
    <citation type="journal article" date="2000" name="Nature">
        <title>Sequence and analysis of chromosome 1 of the plant Arabidopsis thaliana.</title>
        <authorList>
            <person name="Theologis A."/>
            <person name="Ecker J.R."/>
            <person name="Palm C.J."/>
            <person name="Federspiel N.A."/>
            <person name="Kaul S."/>
            <person name="White O."/>
            <person name="Alonso J."/>
            <person name="Altafi H."/>
            <person name="Araujo R."/>
            <person name="Bowman C.L."/>
            <person name="Brooks S.Y."/>
            <person name="Buehler E."/>
            <person name="Chan A."/>
            <person name="Chao Q."/>
            <person name="Chen H."/>
            <person name="Cheuk R.F."/>
            <person name="Chin C.W."/>
            <person name="Chung M.K."/>
            <person name="Conn L."/>
            <person name="Conway A.B."/>
            <person name="Conway A.R."/>
            <person name="Creasy T.H."/>
            <person name="Dewar K."/>
            <person name="Dunn P."/>
            <person name="Etgu P."/>
            <person name="Feldblyum T.V."/>
            <person name="Feng J.-D."/>
            <person name="Fong B."/>
            <person name="Fujii C.Y."/>
            <person name="Gill J.E."/>
            <person name="Goldsmith A.D."/>
            <person name="Haas B."/>
            <person name="Hansen N.F."/>
            <person name="Hughes B."/>
            <person name="Huizar L."/>
            <person name="Hunter J.L."/>
            <person name="Jenkins J."/>
            <person name="Johnson-Hopson C."/>
            <person name="Khan S."/>
            <person name="Khaykin E."/>
            <person name="Kim C.J."/>
            <person name="Koo H.L."/>
            <person name="Kremenetskaia I."/>
            <person name="Kurtz D.B."/>
            <person name="Kwan A."/>
            <person name="Lam B."/>
            <person name="Langin-Hooper S."/>
            <person name="Lee A."/>
            <person name="Lee J.M."/>
            <person name="Lenz C.A."/>
            <person name="Li J.H."/>
            <person name="Li Y.-P."/>
            <person name="Lin X."/>
            <person name="Liu S.X."/>
            <person name="Liu Z.A."/>
            <person name="Luros J.S."/>
            <person name="Maiti R."/>
            <person name="Marziali A."/>
            <person name="Militscher J."/>
            <person name="Miranda M."/>
            <person name="Nguyen M."/>
            <person name="Nierman W.C."/>
            <person name="Osborne B.I."/>
            <person name="Pai G."/>
            <person name="Peterson J."/>
            <person name="Pham P.K."/>
            <person name="Rizzo M."/>
            <person name="Rooney T."/>
            <person name="Rowley D."/>
            <person name="Sakano H."/>
            <person name="Salzberg S.L."/>
            <person name="Schwartz J.R."/>
            <person name="Shinn P."/>
            <person name="Southwick A.M."/>
            <person name="Sun H."/>
            <person name="Tallon L.J."/>
            <person name="Tambunga G."/>
            <person name="Toriumi M.J."/>
            <person name="Town C.D."/>
            <person name="Utterback T."/>
            <person name="Van Aken S."/>
            <person name="Vaysberg M."/>
            <person name="Vysotskaia V.S."/>
            <person name="Walker M."/>
            <person name="Wu D."/>
            <person name="Yu G."/>
            <person name="Fraser C.M."/>
            <person name="Venter J.C."/>
            <person name="Davis R.W."/>
        </authorList>
    </citation>
    <scope>NUCLEOTIDE SEQUENCE [LARGE SCALE GENOMIC DNA]</scope>
    <source>
        <strain>cv. Columbia</strain>
    </source>
</reference>
<reference key="2">
    <citation type="journal article" date="2017" name="Plant J.">
        <title>Araport11: a complete reannotation of the Arabidopsis thaliana reference genome.</title>
        <authorList>
            <person name="Cheng C.Y."/>
            <person name="Krishnakumar V."/>
            <person name="Chan A.P."/>
            <person name="Thibaud-Nissen F."/>
            <person name="Schobel S."/>
            <person name="Town C.D."/>
        </authorList>
    </citation>
    <scope>GENOME REANNOTATION</scope>
    <source>
        <strain>cv. Columbia</strain>
    </source>
</reference>
<reference key="3">
    <citation type="submission" date="2005-05" db="EMBL/GenBank/DDBJ databases">
        <authorList>
            <person name="Underwood B.A."/>
            <person name="Xiao Y.-L."/>
            <person name="Moskal W.A. Jr."/>
            <person name="Monaghan E.L."/>
            <person name="Wang W."/>
            <person name="Redman J.C."/>
            <person name="Wu H.C."/>
            <person name="Utterback T."/>
            <person name="Town C.D."/>
        </authorList>
    </citation>
    <scope>NUCLEOTIDE SEQUENCE [LARGE SCALE MRNA]</scope>
    <source>
        <strain>cv. Columbia</strain>
    </source>
</reference>
<reference key="4">
    <citation type="journal article" date="2002" name="Gene">
        <title>Analysis and expression of the class III peroxidase large gene family in Arabidopsis thaliana.</title>
        <authorList>
            <person name="Tognolli M."/>
            <person name="Penel C."/>
            <person name="Greppin H."/>
            <person name="Simon P."/>
        </authorList>
    </citation>
    <scope>GENE FAMILY ORGANIZATION</scope>
    <scope>NOMENCLATURE</scope>
    <source>
        <strain>cv. Columbia</strain>
    </source>
</reference>
<sequence length="326" mass="36253">MKSFGLCLFILVSSPCLLQANLSSDYYTKTCPEFEETLVQIVTDKQIAAPTTAVGTLRLFFHDCMVDGCDASILVASTPRKTSERDADINRSLPGDAFDVITRIKTAVELKCPNIVSCSDILVGATRSLISMVGGPRVNVKFGRKDSLVSDMNRVEGKLARPNMTMDHIISIFESSGLTVQEMVALVGAHTIGFSHCKEFASRIFNKSDQNGPVEMNPKYAAELRKLCANYTNDEQMSAFNDVFTPGKFDNMYYKNLKHGYGLLQSDHAIAFDNRTRSLVDLYAEDETAFFDAFAKAMEKVSEKNVKTGKLGEVRRRCDQYNDYKG</sequence>
<organism>
    <name type="scientific">Arabidopsis thaliana</name>
    <name type="common">Mouse-ear cress</name>
    <dbReference type="NCBI Taxonomy" id="3702"/>
    <lineage>
        <taxon>Eukaryota</taxon>
        <taxon>Viridiplantae</taxon>
        <taxon>Streptophyta</taxon>
        <taxon>Embryophyta</taxon>
        <taxon>Tracheophyta</taxon>
        <taxon>Spermatophyta</taxon>
        <taxon>Magnoliopsida</taxon>
        <taxon>eudicotyledons</taxon>
        <taxon>Gunneridae</taxon>
        <taxon>Pentapetalae</taxon>
        <taxon>rosids</taxon>
        <taxon>malvids</taxon>
        <taxon>Brassicales</taxon>
        <taxon>Brassicaceae</taxon>
        <taxon>Camelineae</taxon>
        <taxon>Arabidopsis</taxon>
    </lineage>
</organism>